<organism>
    <name type="scientific">Homo sapiens</name>
    <name type="common">Human</name>
    <dbReference type="NCBI Taxonomy" id="9606"/>
    <lineage>
        <taxon>Eukaryota</taxon>
        <taxon>Metazoa</taxon>
        <taxon>Chordata</taxon>
        <taxon>Craniata</taxon>
        <taxon>Vertebrata</taxon>
        <taxon>Euteleostomi</taxon>
        <taxon>Mammalia</taxon>
        <taxon>Eutheria</taxon>
        <taxon>Euarchontoglires</taxon>
        <taxon>Primates</taxon>
        <taxon>Haplorrhini</taxon>
        <taxon>Catarrhini</taxon>
        <taxon>Hominidae</taxon>
        <taxon>Homo</taxon>
    </lineage>
</organism>
<name>S22AO_HUMAN</name>
<protein>
    <recommendedName>
        <fullName evidence="3">Steroid transmembrane transporter SLC22A24</fullName>
    </recommendedName>
    <alternativeName>
        <fullName evidence="7">Solute carrier family 22 member 24</fullName>
    </alternativeName>
</protein>
<accession>Q8N4F4</accession>
<accession>A0A087WWM3</accession>
<accession>C9JC66</accession>
<keyword id="KW-0025">Alternative splicing</keyword>
<keyword id="KW-1003">Cell membrane</keyword>
<keyword id="KW-0406">Ion transport</keyword>
<keyword id="KW-0443">Lipid metabolism</keyword>
<keyword id="KW-0445">Lipid transport</keyword>
<keyword id="KW-0472">Membrane</keyword>
<keyword id="KW-1185">Reference proteome</keyword>
<keyword id="KW-0753">Steroid metabolism</keyword>
<keyword id="KW-0812">Transmembrane</keyword>
<keyword id="KW-1133">Transmembrane helix</keyword>
<keyword id="KW-0813">Transport</keyword>
<feature type="chain" id="PRO_0000317526" description="Steroid transmembrane transporter SLC22A24">
    <location>
        <begin position="1"/>
        <end position="552"/>
    </location>
</feature>
<feature type="transmembrane region" description="Helical" evidence="1">
    <location>
        <begin position="16"/>
        <end position="36"/>
    </location>
</feature>
<feature type="transmembrane region" description="Helical" evidence="1">
    <location>
        <begin position="146"/>
        <end position="166"/>
    </location>
</feature>
<feature type="transmembrane region" description="Helical" evidence="1">
    <location>
        <begin position="178"/>
        <end position="200"/>
    </location>
</feature>
<feature type="transmembrane region" description="Helical" evidence="1">
    <location>
        <begin position="204"/>
        <end position="226"/>
    </location>
</feature>
<feature type="transmembrane region" description="Helical" evidence="1">
    <location>
        <begin position="234"/>
        <end position="254"/>
    </location>
</feature>
<feature type="transmembrane region" description="Helical" evidence="1">
    <location>
        <begin position="260"/>
        <end position="280"/>
    </location>
</feature>
<feature type="transmembrane region" description="Helical" evidence="1">
    <location>
        <begin position="350"/>
        <end position="370"/>
    </location>
</feature>
<feature type="transmembrane region" description="Helical" evidence="1">
    <location>
        <begin position="380"/>
        <end position="400"/>
    </location>
</feature>
<feature type="transmembrane region" description="Helical" evidence="1">
    <location>
        <begin position="407"/>
        <end position="427"/>
    </location>
</feature>
<feature type="transmembrane region" description="Helical" evidence="1">
    <location>
        <begin position="435"/>
        <end position="455"/>
    </location>
</feature>
<feature type="transmembrane region" description="Helical" evidence="1">
    <location>
        <begin position="474"/>
        <end position="492"/>
    </location>
</feature>
<feature type="transmembrane region" description="Helical" evidence="1">
    <location>
        <begin position="496"/>
        <end position="516"/>
    </location>
</feature>
<feature type="splice variant" id="VSP_060488" description="In isoform 3.">
    <original>KMVESARWLIINNQLDEGLKELRRVAHINGKKNTEETLTTELVRS</original>
    <variation>YEQSPHSLPVSEAMVDIERKILTPGICSVSGLVLSHDVHSTYCVT</variation>
    <location>
        <begin position="278"/>
        <end position="322"/>
    </location>
</feature>
<feature type="splice variant" id="VSP_060489" description="In isoform 3.">
    <location>
        <begin position="323"/>
        <end position="552"/>
    </location>
</feature>
<feature type="splice variant" id="VSP_060490" description="In isoform 2.">
    <original>DR</original>
    <variation>E</variation>
    <location>
        <begin position="533"/>
        <end position="534"/>
    </location>
</feature>
<feature type="sequence variant" id="VAR_083069" description="Decreased sterol transport; probable decreased expression due to nonsense-mediated decay; dbSNP:rs1123134." evidence="2">
    <location>
        <begin position="501"/>
        <end position="552"/>
    </location>
</feature>
<feature type="sequence conflict" description="In Ref. 2; AAH34394.1." evidence="4" ref="2">
    <original>T</original>
    <variation>S</variation>
    <location sequence="Q8N4F4-1">
        <position position="58"/>
    </location>
</feature>
<feature type="sequence conflict" description="In Ref. 2; AAH34394.1." evidence="4" ref="2">
    <original>L</original>
    <variation>V</variation>
    <location sequence="Q8N4F4-1">
        <position position="299"/>
    </location>
</feature>
<reference key="1">
    <citation type="journal article" date="2006" name="Nature">
        <title>Human chromosome 11 DNA sequence and analysis including novel gene identification.</title>
        <authorList>
            <person name="Taylor T.D."/>
            <person name="Noguchi H."/>
            <person name="Totoki Y."/>
            <person name="Toyoda A."/>
            <person name="Kuroki Y."/>
            <person name="Dewar K."/>
            <person name="Lloyd C."/>
            <person name="Itoh T."/>
            <person name="Takeda T."/>
            <person name="Kim D.-W."/>
            <person name="She X."/>
            <person name="Barlow K.F."/>
            <person name="Bloom T."/>
            <person name="Bruford E."/>
            <person name="Chang J.L."/>
            <person name="Cuomo C.A."/>
            <person name="Eichler E."/>
            <person name="FitzGerald M.G."/>
            <person name="Jaffe D.B."/>
            <person name="LaButti K."/>
            <person name="Nicol R."/>
            <person name="Park H.-S."/>
            <person name="Seaman C."/>
            <person name="Sougnez C."/>
            <person name="Yang X."/>
            <person name="Zimmer A.R."/>
            <person name="Zody M.C."/>
            <person name="Birren B.W."/>
            <person name="Nusbaum C."/>
            <person name="Fujiyama A."/>
            <person name="Hattori M."/>
            <person name="Rogers J."/>
            <person name="Lander E.S."/>
            <person name="Sakaki Y."/>
        </authorList>
    </citation>
    <scope>NUCLEOTIDE SEQUENCE [LARGE SCALE GENOMIC DNA]</scope>
</reference>
<reference key="2">
    <citation type="journal article" date="2004" name="Genome Res.">
        <title>The status, quality, and expansion of the NIH full-length cDNA project: the Mammalian Gene Collection (MGC).</title>
        <authorList>
            <consortium name="The MGC Project Team"/>
        </authorList>
    </citation>
    <scope>NUCLEOTIDE SEQUENCE [LARGE SCALE MRNA]</scope>
</reference>
<reference key="3">
    <citation type="journal article" date="2007" name="Genomics">
        <title>Identification of six putative human transporters with structural similarity to the drug transporter SLC22 family.</title>
        <authorList>
            <person name="Jacobsson J.A."/>
            <person name="Haitina T."/>
            <person name="Lindblom J."/>
            <person name="Fredriksson R."/>
        </authorList>
    </citation>
    <scope>FUNCTION</scope>
</reference>
<reference key="4">
    <citation type="journal article" date="2019" name="PLoS Genet.">
        <title>Unraveling the functional role of the orphan solute carrier, SLC22A24 in the transport of steroid conjugates through metabolomic and genome-wide association studies.</title>
        <authorList>
            <person name="Yee S.W."/>
            <person name="Stecula A."/>
            <person name="Chien H.C."/>
            <person name="Zou L."/>
            <person name="Feofanova E.V."/>
            <person name="van Borselen M."/>
            <person name="Cheung K.W.K."/>
            <person name="Yousri N.A."/>
            <person name="Suhre K."/>
            <person name="Kinchen J.M."/>
            <person name="Boerwinkle E."/>
            <person name="Irannejad R."/>
            <person name="Yu B."/>
            <person name="Giacomini K.M."/>
        </authorList>
    </citation>
    <scope>FUNCTION</scope>
    <scope>TRANSPORTER ACTIVITY</scope>
    <scope>TISSUE SPECIFICITY</scope>
    <scope>SUBCELLULAR LOCATION</scope>
    <scope>BIOPHYSICOCHEMICAL PROPERTIES</scope>
    <scope>ACTIVITY REGULATION</scope>
    <scope>POLYMORPHISM</scope>
    <scope>VARIANT 501-TYR--PHE-552 DEL</scope>
    <scope>CHARACTERIZATION OF VARIANT 501-TYR--PHE-552 DEL</scope>
    <scope>ISOFORM 1; ISOFORM 2 AND ISOFORM 3</scope>
</reference>
<sequence>MGFDVLLDQVGGMGRFQICLIAFFCITNILLFPNIVLENFTAFTPSHRCWVPLLDNDTVSDNDTGTLSKDDLLRISIPLDSNLRPQKCQRFIHPQWQLLHLNGTFPNTNEPDTEPCVDGWVYDRSSFLSTIVTEWDLVCESQSLKSMVQSLFMAGSLLGGLIYGHLSDRVGRKIICKLCFLQLAISNTCAAFAPTFLVYCILRFLAGFSTMTILGNTFILSLEWTLPRSRSMTIMVLLCSYSVGQMLLGGLAFAIQDWHILQLTVSTPIIVLFLSSWKMVESARWLIINNQLDEGLKELRRVAHINGKKNTEETLTTELVRSTMKKELDAVRIKTSIFSLFRAPKLRMRVFGLCFVRFAITVPFYGLILNLQHLGSNVSLFQILCGAVTFTARCVSLLTLNHMGRRISQILFTFPVGLFILVNTFLPQEMQILRVVLATLGIGSVSAASNSASVHHNELVPTILRSTVAGINAVSGRTGAALAPLLMTLMAYSPHLPWISYGVFPILAVPVILLLPETRDLPLPNTIQDVENDRKDSRNIKQEDTCMKVTQF</sequence>
<gene>
    <name evidence="7" type="primary">SLC22A24</name>
</gene>
<proteinExistence type="evidence at protein level"/>
<dbReference type="EMBL" id="KF459672">
    <property type="status" value="NOT_ANNOTATED_CDS"/>
    <property type="molecule type" value="Genomic_DNA"/>
</dbReference>
<dbReference type="EMBL" id="AP001858">
    <property type="status" value="NOT_ANNOTATED_CDS"/>
    <property type="molecule type" value="Genomic_DNA"/>
</dbReference>
<dbReference type="EMBL" id="BC034394">
    <property type="protein sequence ID" value="AAH34394.1"/>
    <property type="molecule type" value="mRNA"/>
</dbReference>
<dbReference type="CCDS" id="CCDS73308.1">
    <molecule id="Q8N4F4-2"/>
</dbReference>
<dbReference type="CCDS" id="CCDS76422.1">
    <molecule id="Q8N4F4-1"/>
</dbReference>
<dbReference type="RefSeq" id="NP_001129978.2">
    <molecule id="Q8N4F4-2"/>
    <property type="nucleotide sequence ID" value="NM_001136506.2"/>
</dbReference>
<dbReference type="RefSeq" id="NP_775857.2">
    <molecule id="Q8N4F4-1"/>
    <property type="nucleotide sequence ID" value="NM_173586.3"/>
</dbReference>
<dbReference type="SMR" id="Q8N4F4"/>
<dbReference type="BioGRID" id="129508">
    <property type="interactions" value="1"/>
</dbReference>
<dbReference type="FunCoup" id="Q8N4F4">
    <property type="interactions" value="29"/>
</dbReference>
<dbReference type="IntAct" id="Q8N4F4">
    <property type="interactions" value="2"/>
</dbReference>
<dbReference type="MINT" id="Q8N4F4"/>
<dbReference type="STRING" id="9606.ENSP00000480336"/>
<dbReference type="TCDB" id="2.A.1.19.21">
    <property type="family name" value="the major facilitator superfamily (mfs)"/>
</dbReference>
<dbReference type="iPTMnet" id="Q8N4F4"/>
<dbReference type="PhosphoSitePlus" id="Q8N4F4"/>
<dbReference type="BioMuta" id="SLC22A24"/>
<dbReference type="DMDM" id="74728846"/>
<dbReference type="jPOST" id="Q8N4F4"/>
<dbReference type="MassIVE" id="Q8N4F4"/>
<dbReference type="PaxDb" id="9606-ENSP00000480336"/>
<dbReference type="PeptideAtlas" id="Q8N4F4"/>
<dbReference type="Antibodypedia" id="28899">
    <property type="antibodies" value="58 antibodies from 17 providers"/>
</dbReference>
<dbReference type="DNASU" id="283238"/>
<dbReference type="Ensembl" id="ENST00000326192.5">
    <molecule id="Q8N4F4-1"/>
    <property type="protein sequence ID" value="ENSP00000321549.5"/>
    <property type="gene ID" value="ENSG00000197658.9"/>
</dbReference>
<dbReference type="Ensembl" id="ENST00000417740.5">
    <molecule id="Q8N4F4-3"/>
    <property type="protein sequence ID" value="ENSP00000396586.1"/>
    <property type="gene ID" value="ENSG00000197658.9"/>
</dbReference>
<dbReference type="Ensembl" id="ENST00000612278.4">
    <molecule id="Q8N4F4-2"/>
    <property type="protein sequence ID" value="ENSP00000480336.1"/>
    <property type="gene ID" value="ENSG00000197658.9"/>
</dbReference>
<dbReference type="GeneID" id="283238"/>
<dbReference type="KEGG" id="hsa:283238"/>
<dbReference type="MANE-Select" id="ENST00000612278.4">
    <property type="protein sequence ID" value="ENSP00000480336.1"/>
    <property type="RefSeq nucleotide sequence ID" value="NM_001136506.2"/>
    <property type="RefSeq protein sequence ID" value="NP_001129978.2"/>
</dbReference>
<dbReference type="UCSC" id="uc010rmn.3">
    <molecule id="Q8N4F4-2"/>
    <property type="organism name" value="human"/>
</dbReference>
<dbReference type="AGR" id="HGNC:28542"/>
<dbReference type="CTD" id="283238"/>
<dbReference type="DisGeNET" id="283238"/>
<dbReference type="GeneCards" id="SLC22A24"/>
<dbReference type="HGNC" id="HGNC:28542">
    <property type="gene designation" value="SLC22A24"/>
</dbReference>
<dbReference type="HPA" id="ENSG00000197658">
    <property type="expression patterns" value="Tissue enriched (kidney)"/>
</dbReference>
<dbReference type="MIM" id="611698">
    <property type="type" value="gene"/>
</dbReference>
<dbReference type="neXtProt" id="NX_Q8N4F4"/>
<dbReference type="OpenTargets" id="ENSG00000197658"/>
<dbReference type="PharmGKB" id="PA162403543"/>
<dbReference type="VEuPathDB" id="HostDB:ENSG00000197658"/>
<dbReference type="eggNOG" id="KOG0255">
    <property type="taxonomic scope" value="Eukaryota"/>
</dbReference>
<dbReference type="GeneTree" id="ENSGT00940000164763"/>
<dbReference type="HOGENOM" id="CLU_001265_33_3_1"/>
<dbReference type="InParanoid" id="Q8N4F4"/>
<dbReference type="OMA" id="ISQMLFT"/>
<dbReference type="OrthoDB" id="2544694at2759"/>
<dbReference type="PAN-GO" id="Q8N4F4">
    <property type="GO annotations" value="1 GO annotation based on evolutionary models"/>
</dbReference>
<dbReference type="PhylomeDB" id="Q8N4F4"/>
<dbReference type="TreeFam" id="TF315847"/>
<dbReference type="PathwayCommons" id="Q8N4F4"/>
<dbReference type="SignaLink" id="Q8N4F4"/>
<dbReference type="BioGRID-ORCS" id="283238">
    <property type="hits" value="10 hits in 384 CRISPR screens"/>
</dbReference>
<dbReference type="ChiTaRS" id="SLC22A24">
    <property type="organism name" value="human"/>
</dbReference>
<dbReference type="GenomeRNAi" id="283238"/>
<dbReference type="Pharos" id="Q8N4F4">
    <property type="development level" value="Tdark"/>
</dbReference>
<dbReference type="PRO" id="PR:Q8N4F4"/>
<dbReference type="Proteomes" id="UP000005640">
    <property type="component" value="Chromosome 11"/>
</dbReference>
<dbReference type="RNAct" id="Q8N4F4">
    <property type="molecule type" value="protein"/>
</dbReference>
<dbReference type="Bgee" id="ENSG00000197658">
    <property type="expression patterns" value="Expressed in buccal mucosa cell and 4 other cell types or tissues"/>
</dbReference>
<dbReference type="GO" id="GO:0005886">
    <property type="term" value="C:plasma membrane"/>
    <property type="evidence" value="ECO:0007669"/>
    <property type="project" value="UniProtKB-SubCell"/>
</dbReference>
<dbReference type="GO" id="GO:0022857">
    <property type="term" value="F:transmembrane transporter activity"/>
    <property type="evidence" value="ECO:0007669"/>
    <property type="project" value="InterPro"/>
</dbReference>
<dbReference type="GO" id="GO:0006811">
    <property type="term" value="P:monoatomic ion transport"/>
    <property type="evidence" value="ECO:0007669"/>
    <property type="project" value="UniProtKB-KW"/>
</dbReference>
<dbReference type="GO" id="GO:0015711">
    <property type="term" value="P:organic anion transport"/>
    <property type="evidence" value="ECO:0000318"/>
    <property type="project" value="GO_Central"/>
</dbReference>
<dbReference type="GO" id="GO:0008202">
    <property type="term" value="P:steroid metabolic process"/>
    <property type="evidence" value="ECO:0000314"/>
    <property type="project" value="UniProtKB"/>
</dbReference>
<dbReference type="GO" id="GO:0035382">
    <property type="term" value="P:sterol transmembrane transport"/>
    <property type="evidence" value="ECO:0000314"/>
    <property type="project" value="UniProtKB"/>
</dbReference>
<dbReference type="CDD" id="cd17374">
    <property type="entry name" value="MFS_OAT"/>
    <property type="match status" value="1"/>
</dbReference>
<dbReference type="FunFam" id="1.20.1250.20:FF:000023">
    <property type="entry name" value="Solute carrier family 22 member 6"/>
    <property type="match status" value="1"/>
</dbReference>
<dbReference type="Gene3D" id="1.20.1250.20">
    <property type="entry name" value="MFS general substrate transporter like domains"/>
    <property type="match status" value="1"/>
</dbReference>
<dbReference type="InterPro" id="IPR020846">
    <property type="entry name" value="MFS_dom"/>
</dbReference>
<dbReference type="InterPro" id="IPR005828">
    <property type="entry name" value="MFS_sugar_transport-like"/>
</dbReference>
<dbReference type="InterPro" id="IPR036259">
    <property type="entry name" value="MFS_trans_sf"/>
</dbReference>
<dbReference type="PANTHER" id="PTHR24064">
    <property type="entry name" value="SOLUTE CARRIER FAMILY 22 MEMBER"/>
    <property type="match status" value="1"/>
</dbReference>
<dbReference type="Pfam" id="PF00083">
    <property type="entry name" value="Sugar_tr"/>
    <property type="match status" value="1"/>
</dbReference>
<dbReference type="SUPFAM" id="SSF103473">
    <property type="entry name" value="MFS general substrate transporter"/>
    <property type="match status" value="1"/>
</dbReference>
<dbReference type="PROSITE" id="PS50850">
    <property type="entry name" value="MFS"/>
    <property type="match status" value="1"/>
</dbReference>
<comment type="function">
    <text evidence="2 5">Renal transmembrane organic anion/dicarboxylate exchanger that participates in the reabsorption of conjugated steroids including estradiol-17beta-D-glucuronide (or 17beta-estradiol 17-O-(beta-D-glucuronate)), androstanediol glucuronide (or 5alpha-androstane-3alpha,17beta-diol 3-O-(beta-D-glucuronate)), and estrone 3-sulfate, as well as bile acids taurocholate and glycocholate, driven by an outward gradient of dicarboxylates such as glutarate or succinate.</text>
</comment>
<comment type="function">
    <molecule>Isoform 2</molecule>
    <text evidence="2">Similar uptake function as Isoform 1.</text>
</comment>
<comment type="function">
    <molecule>Isoform 3</molecule>
    <text evidence="2">Lack of transporter activity.</text>
</comment>
<comment type="catalytic activity">
    <molecule>Isoform 1</molecule>
    <reaction evidence="2">
        <text>estrone 3-sulfate(out) + glutarate(in) = estrone 3-sulfate(in) + glutarate(out)</text>
        <dbReference type="Rhea" id="RHEA:72151"/>
        <dbReference type="ChEBI" id="CHEBI:30921"/>
        <dbReference type="ChEBI" id="CHEBI:60050"/>
    </reaction>
</comment>
<comment type="catalytic activity">
    <molecule>Isoform 2</molecule>
    <reaction evidence="2">
        <text>estrone 3-sulfate(out) + glutarate(in) = estrone 3-sulfate(in) + glutarate(out)</text>
        <dbReference type="Rhea" id="RHEA:72151"/>
        <dbReference type="ChEBI" id="CHEBI:30921"/>
        <dbReference type="ChEBI" id="CHEBI:60050"/>
    </reaction>
</comment>
<comment type="catalytic activity">
    <molecule>Isoform 1</molecule>
    <reaction evidence="2">
        <text>17beta-estradiol 17-O-(beta-D-glucuronate)(out) + glutarate(in) = 17beta-estradiol 17-O-(beta-D-glucuronate)(in) + glutarate(out)</text>
        <dbReference type="Rhea" id="RHEA:72155"/>
        <dbReference type="ChEBI" id="CHEBI:30921"/>
        <dbReference type="ChEBI" id="CHEBI:82961"/>
    </reaction>
</comment>
<comment type="catalytic activity">
    <molecule>Isoform 2</molecule>
    <reaction evidence="2">
        <text>17beta-estradiol 17-O-(beta-D-glucuronate)(out) + glutarate(in) = 17beta-estradiol 17-O-(beta-D-glucuronate)(in) + glutarate(out)</text>
        <dbReference type="Rhea" id="RHEA:72155"/>
        <dbReference type="ChEBI" id="CHEBI:30921"/>
        <dbReference type="ChEBI" id="CHEBI:82961"/>
    </reaction>
</comment>
<comment type="catalytic activity">
    <molecule>Isoform 1</molecule>
    <reaction evidence="2">
        <text>taurocholate(out) + glutarate(in) = taurocholate(in) + glutarate(out)</text>
        <dbReference type="Rhea" id="RHEA:72159"/>
        <dbReference type="ChEBI" id="CHEBI:30921"/>
        <dbReference type="ChEBI" id="CHEBI:36257"/>
    </reaction>
</comment>
<comment type="catalytic activity">
    <molecule>Isoform 2</molecule>
    <reaction evidence="2">
        <text>taurocholate(out) + glutarate(in) = taurocholate(in) + glutarate(out)</text>
        <dbReference type="Rhea" id="RHEA:72159"/>
        <dbReference type="ChEBI" id="CHEBI:30921"/>
        <dbReference type="ChEBI" id="CHEBI:36257"/>
    </reaction>
</comment>
<comment type="catalytic activity">
    <molecule>Isoform 1</molecule>
    <reaction evidence="6">
        <text>5alpha-androstane-3alpha,17beta-diol 3-O-(beta-D-glucuronate)(out) + glutarate(in) = 5alpha-androstane-3alpha,17beta-diol 3-O-(beta-D-glucuronate)(in) + glutarate(out)</text>
        <dbReference type="Rhea" id="RHEA:72175"/>
        <dbReference type="ChEBI" id="CHEBI:30921"/>
        <dbReference type="ChEBI" id="CHEBI:191859"/>
    </reaction>
</comment>
<comment type="catalytic activity">
    <molecule>Isoform 2</molecule>
    <reaction evidence="6">
        <text>5alpha-androstane-3alpha,17beta-diol 3-O-(beta-D-glucuronate)(out) + glutarate(in) = 5alpha-androstane-3alpha,17beta-diol 3-O-(beta-D-glucuronate)(in) + glutarate(out)</text>
        <dbReference type="Rhea" id="RHEA:72175"/>
        <dbReference type="ChEBI" id="CHEBI:30921"/>
        <dbReference type="ChEBI" id="CHEBI:191859"/>
    </reaction>
</comment>
<comment type="catalytic activity">
    <molecule>Isoform 1</molecule>
    <reaction evidence="2">
        <text>glycocholate(out) + glutarate(in) = glycocholate(in) + glutarate(out)</text>
        <dbReference type="Rhea" id="RHEA:72351"/>
        <dbReference type="ChEBI" id="CHEBI:29746"/>
        <dbReference type="ChEBI" id="CHEBI:30921"/>
    </reaction>
</comment>
<comment type="catalytic activity">
    <molecule>Isoform 2</molecule>
    <reaction evidence="2">
        <text>glycocholate(out) + glutarate(in) = glycocholate(in) + glutarate(out)</text>
        <dbReference type="Rhea" id="RHEA:72351"/>
        <dbReference type="ChEBI" id="CHEBI:29746"/>
        <dbReference type="ChEBI" id="CHEBI:30921"/>
    </reaction>
</comment>
<comment type="catalytic activity">
    <molecule>Isoform 1</molecule>
    <reaction evidence="6">
        <text>dehydroepiandrosterone 3-sulfate(out) + glutarate(in) = dehydroepiandrosterone 3-sulfate(in) + glutarate(out)</text>
        <dbReference type="Rhea" id="RHEA:72355"/>
        <dbReference type="ChEBI" id="CHEBI:30921"/>
        <dbReference type="ChEBI" id="CHEBI:57905"/>
    </reaction>
</comment>
<comment type="catalytic activity">
    <molecule>Isoform 2</molecule>
    <reaction evidence="6">
        <text>dehydroepiandrosterone 3-sulfate(out) + glutarate(in) = dehydroepiandrosterone 3-sulfate(in) + glutarate(out)</text>
        <dbReference type="Rhea" id="RHEA:72355"/>
        <dbReference type="ChEBI" id="CHEBI:30921"/>
        <dbReference type="ChEBI" id="CHEBI:57905"/>
    </reaction>
</comment>
<comment type="catalytic activity">
    <molecule>Isoform 1</molecule>
    <reaction evidence="6">
        <text>glutarate(in) + succinate(out) = glutarate(out) + succinate(in)</text>
        <dbReference type="Rhea" id="RHEA:72359"/>
        <dbReference type="ChEBI" id="CHEBI:30031"/>
        <dbReference type="ChEBI" id="CHEBI:30921"/>
    </reaction>
</comment>
<comment type="catalytic activity">
    <molecule>Isoform 2</molecule>
    <reaction evidence="6">
        <text>glutarate(in) + succinate(out) = glutarate(out) + succinate(in)</text>
        <dbReference type="Rhea" id="RHEA:72359"/>
        <dbReference type="ChEBI" id="CHEBI:30031"/>
        <dbReference type="ChEBI" id="CHEBI:30921"/>
    </reaction>
</comment>
<comment type="activity regulation">
    <text evidence="2">Transport is chloride sensitive and transtimulated by glutaric acid (PubMed:31553721). Transport is inhibited by anionic compounds from different chemical classes (PubMed:31553721).</text>
</comment>
<comment type="biophysicochemical properties">
    <kinetics>
        <KM evidence="2">8.6 uM for estrone 3-sulfate</KM>
        <KM evidence="2">17.5 uM for 17beta-estradiol 17-O-(beta-D-glucuronate)</KM>
        <KM evidence="2">10.5 uM for taurocholate</KM>
        <KM evidence="2">33.4 uM for glycocholate</KM>
        <KM evidence="2">741 uM for 5alpha-androstane-3alpha,17beta-diol 3-O-(beta-D-glucuronate) (approximate value)</KM>
    </kinetics>
</comment>
<comment type="subcellular location">
    <molecule>Isoform 1</molecule>
    <subcellularLocation>
        <location>Cell membrane</location>
        <topology evidence="2">Multi-pass membrane protein</topology>
    </subcellularLocation>
</comment>
<comment type="subcellular location">
    <molecule>Isoform 2</molecule>
    <subcellularLocation>
        <location>Cell membrane</location>
        <topology evidence="2">Multi-pass membrane protein</topology>
    </subcellularLocation>
</comment>
<comment type="alternative products">
    <event type="alternative splicing"/>
    <isoform>
        <id>Q8N4F4-2</id>
        <name>1</name>
        <sequence type="displayed"/>
    </isoform>
    <isoform>
        <id>Q8N4F4-1</id>
        <name>3</name>
        <sequence type="described" ref="VSP_060488 VSP_060489"/>
    </isoform>
    <isoform>
        <id>Q8N4F4-3</id>
        <name>2</name>
        <sequence type="described" ref="VSP_060490"/>
    </isoform>
</comment>
<comment type="tissue specificity">
    <molecule>Isoform 1</molecule>
    <text evidence="2">Localized to the kidney (PubMed:31553721). Highly specific expression pattern in the nephron, localized to segment 3 of the proximal tubule (PubMed:31553721).</text>
</comment>
<comment type="tissue specificity">
    <molecule>Isoform 2</molecule>
    <text evidence="2">Localized to the kidney (PubMed:31553721). Highly specific expression pattern in the nephron, localized to segment 3 of the proximal tubule (PubMed:31553721).</text>
</comment>
<comment type="polymorphism">
    <molecule>Isoform 2</molecule>
    <text evidence="3">Presence of two potential AG acceptor sites at the splice junction between exons 9 and 10, thus resulting in two different splice variants.</text>
</comment>
<comment type="similarity">
    <text evidence="4">Belongs to the major facilitator (TC 2.A.1) superfamily. Organic cation transporter (TC 2.A.1.19) family.</text>
</comment>
<evidence type="ECO:0000255" key="1"/>
<evidence type="ECO:0000269" key="2">
    <source>
    </source>
</evidence>
<evidence type="ECO:0000303" key="3">
    <source>
    </source>
</evidence>
<evidence type="ECO:0000305" key="4"/>
<evidence type="ECO:0000305" key="5">
    <source>
    </source>
</evidence>
<evidence type="ECO:0000305" key="6">
    <source>
    </source>
</evidence>
<evidence type="ECO:0000312" key="7">
    <source>
        <dbReference type="HGNC" id="HGNC:28542"/>
    </source>
</evidence>